<proteinExistence type="evidence at protein level"/>
<dbReference type="EC" id="3.4.14.4"/>
<dbReference type="EMBL" id="D89340">
    <property type="protein sequence ID" value="BAA24608.2"/>
    <property type="molecule type" value="mRNA"/>
</dbReference>
<dbReference type="EMBL" id="BC107673">
    <property type="protein sequence ID" value="AAI07674.1"/>
    <property type="molecule type" value="mRNA"/>
</dbReference>
<dbReference type="RefSeq" id="NP_446200.1">
    <property type="nucleotide sequence ID" value="NM_053748.2"/>
</dbReference>
<dbReference type="RefSeq" id="XP_006230695.1">
    <property type="nucleotide sequence ID" value="XM_006230633.5"/>
</dbReference>
<dbReference type="SMR" id="O55096"/>
<dbReference type="FunCoup" id="O55096">
    <property type="interactions" value="2639"/>
</dbReference>
<dbReference type="IntAct" id="O55096">
    <property type="interactions" value="1"/>
</dbReference>
<dbReference type="STRING" id="10116.ENSRNOP00000026968"/>
<dbReference type="MEROPS" id="M49.001"/>
<dbReference type="GlyGen" id="O55096">
    <property type="glycosylation" value="1 site"/>
</dbReference>
<dbReference type="iPTMnet" id="O55096"/>
<dbReference type="PhosphoSitePlus" id="O55096"/>
<dbReference type="jPOST" id="O55096"/>
<dbReference type="PaxDb" id="10116-ENSRNOP00000026968"/>
<dbReference type="Ensembl" id="ENSRNOT00000026968.7">
    <property type="protein sequence ID" value="ENSRNOP00000026968.5"/>
    <property type="gene ID" value="ENSRNOG00000031485.5"/>
</dbReference>
<dbReference type="GeneID" id="114591"/>
<dbReference type="KEGG" id="rno:114591"/>
<dbReference type="UCSC" id="RGD:621127">
    <property type="organism name" value="rat"/>
</dbReference>
<dbReference type="AGR" id="RGD:621127"/>
<dbReference type="CTD" id="10072"/>
<dbReference type="RGD" id="621127">
    <property type="gene designation" value="Dpp3"/>
</dbReference>
<dbReference type="eggNOG" id="KOG3675">
    <property type="taxonomic scope" value="Eukaryota"/>
</dbReference>
<dbReference type="GeneTree" id="ENSGT00390000007335"/>
<dbReference type="HOGENOM" id="CLU_011977_0_0_1"/>
<dbReference type="InParanoid" id="O55096"/>
<dbReference type="OMA" id="QRYWIRD"/>
<dbReference type="OrthoDB" id="4694525at2759"/>
<dbReference type="PhylomeDB" id="O55096"/>
<dbReference type="PRO" id="PR:O55096"/>
<dbReference type="Proteomes" id="UP000002494">
    <property type="component" value="Chromosome 1"/>
</dbReference>
<dbReference type="Bgee" id="ENSRNOG00000031485">
    <property type="expression patterns" value="Expressed in stomach and 19 other cell types or tissues"/>
</dbReference>
<dbReference type="GO" id="GO:0005737">
    <property type="term" value="C:cytoplasm"/>
    <property type="evidence" value="ECO:0000318"/>
    <property type="project" value="GO_Central"/>
</dbReference>
<dbReference type="GO" id="GO:0004177">
    <property type="term" value="F:aminopeptidase activity"/>
    <property type="evidence" value="ECO:0007669"/>
    <property type="project" value="UniProtKB-KW"/>
</dbReference>
<dbReference type="GO" id="GO:0008239">
    <property type="term" value="F:dipeptidyl-peptidase activity"/>
    <property type="evidence" value="ECO:0000266"/>
    <property type="project" value="RGD"/>
</dbReference>
<dbReference type="GO" id="GO:0008235">
    <property type="term" value="F:metalloexopeptidase activity"/>
    <property type="evidence" value="ECO:0007669"/>
    <property type="project" value="InterPro"/>
</dbReference>
<dbReference type="GO" id="GO:0008270">
    <property type="term" value="F:zinc ion binding"/>
    <property type="evidence" value="ECO:0000314"/>
    <property type="project" value="RGD"/>
</dbReference>
<dbReference type="GO" id="GO:0030163">
    <property type="term" value="P:protein catabolic process"/>
    <property type="evidence" value="ECO:0000314"/>
    <property type="project" value="RGD"/>
</dbReference>
<dbReference type="GO" id="GO:0006508">
    <property type="term" value="P:proteolysis"/>
    <property type="evidence" value="ECO:0000266"/>
    <property type="project" value="RGD"/>
</dbReference>
<dbReference type="FunFam" id="3.30.540.30:FF:000001">
    <property type="entry name" value="Dipeptidyl peptidase 3"/>
    <property type="match status" value="1"/>
</dbReference>
<dbReference type="FunFam" id="3.30.540.30:FF:000002">
    <property type="entry name" value="Dipeptidyl peptidase 3"/>
    <property type="match status" value="1"/>
</dbReference>
<dbReference type="FunFam" id="3.30.540.30:FF:000003">
    <property type="entry name" value="Dipeptidyl peptidase 3"/>
    <property type="match status" value="1"/>
</dbReference>
<dbReference type="Gene3D" id="3.30.540.30">
    <property type="match status" value="3"/>
</dbReference>
<dbReference type="InterPro" id="IPR005317">
    <property type="entry name" value="Dipeptidyl-peptase3"/>
</dbReference>
<dbReference type="InterPro" id="IPR039461">
    <property type="entry name" value="Peptidase_M49"/>
</dbReference>
<dbReference type="PANTHER" id="PTHR23422:SF11">
    <property type="entry name" value="DIPEPTIDYL PEPTIDASE 3"/>
    <property type="match status" value="1"/>
</dbReference>
<dbReference type="PANTHER" id="PTHR23422">
    <property type="entry name" value="DIPEPTIDYL PEPTIDASE III-RELATED"/>
    <property type="match status" value="1"/>
</dbReference>
<dbReference type="Pfam" id="PF03571">
    <property type="entry name" value="Peptidase_M49"/>
    <property type="match status" value="1"/>
</dbReference>
<dbReference type="PIRSF" id="PIRSF007828">
    <property type="entry name" value="Dipeptidyl-peptidase_III"/>
    <property type="match status" value="1"/>
</dbReference>
<organism>
    <name type="scientific">Rattus norvegicus</name>
    <name type="common">Rat</name>
    <dbReference type="NCBI Taxonomy" id="10116"/>
    <lineage>
        <taxon>Eukaryota</taxon>
        <taxon>Metazoa</taxon>
        <taxon>Chordata</taxon>
        <taxon>Craniata</taxon>
        <taxon>Vertebrata</taxon>
        <taxon>Euteleostomi</taxon>
        <taxon>Mammalia</taxon>
        <taxon>Eutheria</taxon>
        <taxon>Euarchontoglires</taxon>
        <taxon>Glires</taxon>
        <taxon>Rodentia</taxon>
        <taxon>Myomorpha</taxon>
        <taxon>Muroidea</taxon>
        <taxon>Muridae</taxon>
        <taxon>Murinae</taxon>
        <taxon>Rattus</taxon>
    </lineage>
</organism>
<name>DPP3_RAT</name>
<reference key="1">
    <citation type="journal article" date="1998" name="Biochem. J.">
        <title>Dipeptidyl peptidase III is a zinc metallo-exopeptidase. Molecular cloning and expression.</title>
        <authorList>
            <person name="Fukasawa K."/>
            <person name="Fukusawa K.M."/>
            <person name="Kanai M."/>
            <person name="Fujii S."/>
            <person name="Hirose J."/>
            <person name="Harada M."/>
        </authorList>
    </citation>
    <scope>NUCLEOTIDE SEQUENCE [MRNA]</scope>
    <scope>CHARACTERIZATION</scope>
    <source>
        <strain>Wistar</strain>
        <tissue>Liver</tissue>
    </source>
</reference>
<reference key="2">
    <citation type="journal article" date="1999" name="Biochemistry">
        <title>The HELLGH motif of rat liver dipeptidyl peptidase III is involved in zinc coordination and the catalytic activity of the enzyme.</title>
        <authorList>
            <person name="Fukasawa K."/>
            <person name="Fukasawa K.M."/>
            <person name="Iwamoto H."/>
            <person name="Hirose J."/>
            <person name="Harada M."/>
        </authorList>
    </citation>
    <scope>SEQUENCE REVISION</scope>
    <scope>MUTAGENESIS OF HIS-450; GLU-451 AND HIS-455</scope>
    <scope>ACTIVE SITE</scope>
    <scope>COFACTOR</scope>
    <source>
        <strain>Wistar</strain>
        <tissue>Liver</tissue>
    </source>
</reference>
<reference key="3">
    <citation type="journal article" date="2004" name="Genome Res.">
        <title>The status, quality, and expansion of the NIH full-length cDNA project: the Mammalian Gene Collection (MGC).</title>
        <authorList>
            <consortium name="The MGC Project Team"/>
        </authorList>
    </citation>
    <scope>NUCLEOTIDE SEQUENCE [LARGE SCALE MRNA]</scope>
    <source>
        <tissue>Prostate</tissue>
    </source>
</reference>
<reference key="4">
    <citation type="journal article" date="2000" name="Biochem. Biophys. Res. Commun.">
        <title>Alteration of rat dipeptidyl peptidase III by site-directed mutagenesis: cysteine(176) is a regulatory residue for the enzyme activity.</title>
        <authorList>
            <person name="Li Y.H."/>
            <person name="Maeda T."/>
            <person name="Yamane T."/>
            <person name="Ohkubo I."/>
        </authorList>
    </citation>
    <scope>MUTAGENESIS OF CYSTEINE RESIDUES</scope>
</reference>
<reference key="5">
    <citation type="journal article" date="2000" name="Biol. Chem.">
        <title>Human and rat dipeptidyl peptidase III: biochemical and mass spectrometric arguments for similarities and differences.</title>
        <authorList>
            <person name="Abramic M."/>
            <person name="Schleuder D."/>
            <person name="Dolovcak L."/>
            <person name="Schroeder W."/>
            <person name="Strupat K."/>
            <person name="Sagi D."/>
            <person name="Peter-Katalini J."/>
            <person name="Vitale L."/>
        </authorList>
    </citation>
    <scope>CHARACTERIZATION</scope>
    <scope>IDENTIFICATION BY MASS SPECTROMETRY</scope>
    <source>
        <tissue>Erythrocyte</tissue>
    </source>
</reference>
<accession>O55096</accession>
<accession>Q32Q87</accession>
<evidence type="ECO:0000250" key="1"/>
<evidence type="ECO:0000250" key="2">
    <source>
        <dbReference type="UniProtKB" id="Q9NY33"/>
    </source>
</evidence>
<evidence type="ECO:0000269" key="3">
    <source>
    </source>
</evidence>
<evidence type="ECO:0000269" key="4">
    <source>
    </source>
</evidence>
<evidence type="ECO:0000305" key="5"/>
<protein>
    <recommendedName>
        <fullName>Dipeptidyl peptidase 3</fullName>
        <ecNumber>3.4.14.4</ecNumber>
    </recommendedName>
    <alternativeName>
        <fullName>Dipeptidyl aminopeptidase III</fullName>
    </alternativeName>
    <alternativeName>
        <fullName>Dipeptidyl arylamidase III</fullName>
    </alternativeName>
    <alternativeName>
        <fullName>Dipeptidyl peptidase III</fullName>
        <shortName>DPP III</shortName>
    </alternativeName>
    <alternativeName>
        <fullName>Enkephalinase B</fullName>
    </alternativeName>
</protein>
<comment type="function">
    <text evidence="2">Cleaves and degrades bioactive peptides, including angiotensin, Leu-enkephalin and Met-enkephalin (By similarity). Also cleaves Arg-Arg-beta-naphthylamide.</text>
</comment>
<comment type="catalytic activity">
    <reaction>
        <text>Release of an N-terminal dipeptide from a peptide comprising four or more residues, with broad specificity. Also acts on dipeptidyl 2-naphthylamides.</text>
        <dbReference type="EC" id="3.4.14.4"/>
    </reaction>
</comment>
<comment type="cofactor">
    <cofactor evidence="3">
        <name>Zn(2+)</name>
        <dbReference type="ChEBI" id="CHEBI:29105"/>
    </cofactor>
    <text evidence="3">Binds 1 zinc ion per subunit.</text>
</comment>
<comment type="activity regulation">
    <text evidence="1">Inhibited by spinorphin, an opioid peptide derived from hemoglobin.</text>
</comment>
<comment type="biophysicochemical properties">
    <phDependence>
        <text>Optimum pH is 9.0.</text>
    </phDependence>
</comment>
<comment type="subcellular location">
    <subcellularLocation>
        <location>Cytoplasm</location>
    </subcellularLocation>
</comment>
<comment type="similarity">
    <text evidence="5">Belongs to the peptidase M49 family.</text>
</comment>
<keyword id="KW-0007">Acetylation</keyword>
<keyword id="KW-0031">Aminopeptidase</keyword>
<keyword id="KW-0963">Cytoplasm</keyword>
<keyword id="KW-0378">Hydrolase</keyword>
<keyword id="KW-0479">Metal-binding</keyword>
<keyword id="KW-0482">Metalloprotease</keyword>
<keyword id="KW-0645">Protease</keyword>
<keyword id="KW-1185">Reference proteome</keyword>
<keyword id="KW-0862">Zinc</keyword>
<gene>
    <name type="primary">Dpp3</name>
</gene>
<sequence length="738" mass="83039">MADTQYILPNDIGVSSLDCREAFRLLSPTERLYAHHLSRAAWYGGLAVLLQTSPEAPYIYALLSRLFRAQDPDQLRQHALAEGLTEEEYQAFLVYAAGVYSNMGNYKSFGDTKFVPNLPKEKLERVILGSKAAQQHPEEVRSLWQTCGELMFSLEPRLRHLGLGKEGVTTYFSGDCAMEDAKLAQDFLDSQNLSAYNTRLFKVVGQEGKYHYEVRLASVLNTEPALDSELTSKLKSYEFQGNHFQVTRGDYAPILQKVVEHLEKAKAYAANSHQEQMLAQYVESFTQGSIEAHKRGSRFWIQDKGPIVESYIGFIESYRDPFGSRGEFEGFVAMVNKDMSAKFERLVASAEQLLKELPWPPAFEKDKFLTPDFTSLDVLTFAGSGIPAGINIPNYDDLRQTEGFKNVSLGNVLAVAYATKREKLTFMEEEDKDLYIRWKGPSFDVQVGLHELLGHGSGKLFVQDEKGAFNFDQETVINPETGEQIQSWYRSGETWDSKFSTIASSYEECRAESVGLYLCLNPQVLQIFGFEGTDAEDVIYVNWLNMVRAGLLALEFYTPETANWRQAHMQARFVILRVLLEAGEGLVTVTPTTGSDGRPDARVHLDRSKIRSVGKPALERFLRRLQVLKSTGDVVAGRALYEGYAAVTDAPPECFLTLRDTVLLRKESRKLIVQPNTRLEGSEVQLVEYEASAAGLIRSFCERFPEDGPELEEVLTQLATADAQFWRDQVQEAPSGQA</sequence>
<feature type="initiator methionine" description="Removed" evidence="2">
    <location>
        <position position="1"/>
    </location>
</feature>
<feature type="chain" id="PRO_0000078240" description="Dipeptidyl peptidase 3">
    <location>
        <begin position="2"/>
        <end position="738"/>
    </location>
</feature>
<feature type="active site" evidence="3">
    <location>
        <position position="451"/>
    </location>
</feature>
<feature type="binding site" evidence="3">
    <location>
        <position position="450"/>
    </location>
    <ligand>
        <name>Zn(2+)</name>
        <dbReference type="ChEBI" id="CHEBI:29105"/>
        <note>catalytic</note>
    </ligand>
</feature>
<feature type="binding site" evidence="3">
    <location>
        <position position="455"/>
    </location>
    <ligand>
        <name>Zn(2+)</name>
        <dbReference type="ChEBI" id="CHEBI:29105"/>
        <note>catalytic</note>
    </ligand>
</feature>
<feature type="binding site" evidence="2">
    <location>
        <position position="508"/>
    </location>
    <ligand>
        <name>Zn(2+)</name>
        <dbReference type="ChEBI" id="CHEBI:29105"/>
        <note>catalytic</note>
    </ligand>
</feature>
<feature type="modified residue" description="N-acetylalanine" evidence="2">
    <location>
        <position position="2"/>
    </location>
</feature>
<feature type="mutagenesis site" description="25% to 35% of wild-type activity." evidence="4">
    <original>C</original>
    <variation>A</variation>
    <location>
        <position position="176"/>
    </location>
</feature>
<feature type="mutagenesis site" description="Loss of activity." evidence="4">
    <original>C</original>
    <variation>E</variation>
    <variation>G</variation>
    <location>
        <position position="176"/>
    </location>
</feature>
<feature type="mutagenesis site" description="Loss of activity and zinc binding." evidence="3">
    <original>H</original>
    <variation>Y</variation>
    <location>
        <position position="450"/>
    </location>
</feature>
<feature type="mutagenesis site" description="Loss of activity." evidence="3">
    <original>E</original>
    <variation>A</variation>
    <variation>D</variation>
    <location>
        <position position="451"/>
    </location>
</feature>
<feature type="mutagenesis site" description="Loss of activity and zinc binding." evidence="3">
    <original>H</original>
    <variation>Y</variation>
    <location>
        <position position="455"/>
    </location>
</feature>